<proteinExistence type="inferred from homology"/>
<name>PSBI_PROM2</name>
<gene>
    <name evidence="1" type="primary">psbI</name>
    <name type="ordered locus">P9215_02771</name>
</gene>
<feature type="chain" id="PRO_1000067523" description="Photosystem II reaction center protein I">
    <location>
        <begin position="1"/>
        <end position="42"/>
    </location>
</feature>
<feature type="transmembrane region" description="Helical" evidence="1">
    <location>
        <begin position="6"/>
        <end position="26"/>
    </location>
</feature>
<evidence type="ECO:0000255" key="1">
    <source>
        <dbReference type="HAMAP-Rule" id="MF_01316"/>
    </source>
</evidence>
<evidence type="ECO:0000305" key="2"/>
<dbReference type="EMBL" id="CP000825">
    <property type="protein sequence ID" value="ABV49894.1"/>
    <property type="molecule type" value="Genomic_DNA"/>
</dbReference>
<dbReference type="RefSeq" id="WP_002805124.1">
    <property type="nucleotide sequence ID" value="NC_009840.1"/>
</dbReference>
<dbReference type="SMR" id="A8G2R3"/>
<dbReference type="STRING" id="93060.P9215_02771"/>
<dbReference type="KEGG" id="pmh:P9215_02771"/>
<dbReference type="HOGENOM" id="CLU_212150_0_0_3"/>
<dbReference type="Proteomes" id="UP000002014">
    <property type="component" value="Chromosome"/>
</dbReference>
<dbReference type="GO" id="GO:0009539">
    <property type="term" value="C:photosystem II reaction center"/>
    <property type="evidence" value="ECO:0007669"/>
    <property type="project" value="InterPro"/>
</dbReference>
<dbReference type="GO" id="GO:0031676">
    <property type="term" value="C:plasma membrane-derived thylakoid membrane"/>
    <property type="evidence" value="ECO:0007669"/>
    <property type="project" value="UniProtKB-SubCell"/>
</dbReference>
<dbReference type="GO" id="GO:0015979">
    <property type="term" value="P:photosynthesis"/>
    <property type="evidence" value="ECO:0007669"/>
    <property type="project" value="UniProtKB-UniRule"/>
</dbReference>
<dbReference type="HAMAP" id="MF_01316">
    <property type="entry name" value="PSII_PsbI"/>
    <property type="match status" value="1"/>
</dbReference>
<dbReference type="InterPro" id="IPR003686">
    <property type="entry name" value="PSII_PsbI"/>
</dbReference>
<dbReference type="InterPro" id="IPR037271">
    <property type="entry name" value="PSII_PsbI_sf"/>
</dbReference>
<dbReference type="NCBIfam" id="NF002735">
    <property type="entry name" value="PRK02655.1"/>
    <property type="match status" value="1"/>
</dbReference>
<dbReference type="PANTHER" id="PTHR35772">
    <property type="entry name" value="PHOTOSYSTEM II REACTION CENTER PROTEIN I"/>
    <property type="match status" value="1"/>
</dbReference>
<dbReference type="PANTHER" id="PTHR35772:SF1">
    <property type="entry name" value="PHOTOSYSTEM II REACTION CENTER PROTEIN I"/>
    <property type="match status" value="1"/>
</dbReference>
<dbReference type="Pfam" id="PF02532">
    <property type="entry name" value="PsbI"/>
    <property type="match status" value="1"/>
</dbReference>
<dbReference type="SUPFAM" id="SSF161041">
    <property type="entry name" value="Photosystem II reaction center protein I, PsbI"/>
    <property type="match status" value="1"/>
</dbReference>
<sequence>MLALKISVYTIVFFFVGIFLFGFLASDPTRTPNRKDLESPQD</sequence>
<organism>
    <name type="scientific">Prochlorococcus marinus (strain MIT 9215)</name>
    <dbReference type="NCBI Taxonomy" id="93060"/>
    <lineage>
        <taxon>Bacteria</taxon>
        <taxon>Bacillati</taxon>
        <taxon>Cyanobacteriota</taxon>
        <taxon>Cyanophyceae</taxon>
        <taxon>Synechococcales</taxon>
        <taxon>Prochlorococcaceae</taxon>
        <taxon>Prochlorococcus</taxon>
    </lineage>
</organism>
<keyword id="KW-0472">Membrane</keyword>
<keyword id="KW-0602">Photosynthesis</keyword>
<keyword id="KW-0604">Photosystem II</keyword>
<keyword id="KW-0674">Reaction center</keyword>
<keyword id="KW-0793">Thylakoid</keyword>
<keyword id="KW-0812">Transmembrane</keyword>
<keyword id="KW-1133">Transmembrane helix</keyword>
<protein>
    <recommendedName>
        <fullName evidence="1">Photosystem II reaction center protein I</fullName>
        <shortName evidence="1">PSII-I</shortName>
    </recommendedName>
    <alternativeName>
        <fullName evidence="1">PSII 4.4 kDa protein</fullName>
    </alternativeName>
</protein>
<accession>A8G2R3</accession>
<reference key="1">
    <citation type="journal article" date="2007" name="PLoS Genet.">
        <title>Patterns and implications of gene gain and loss in the evolution of Prochlorococcus.</title>
        <authorList>
            <person name="Kettler G.C."/>
            <person name="Martiny A.C."/>
            <person name="Huang K."/>
            <person name="Zucker J."/>
            <person name="Coleman M.L."/>
            <person name="Rodrigue S."/>
            <person name="Chen F."/>
            <person name="Lapidus A."/>
            <person name="Ferriera S."/>
            <person name="Johnson J."/>
            <person name="Steglich C."/>
            <person name="Church G.M."/>
            <person name="Richardson P."/>
            <person name="Chisholm S.W."/>
        </authorList>
    </citation>
    <scope>NUCLEOTIDE SEQUENCE [LARGE SCALE GENOMIC DNA]</scope>
    <source>
        <strain>MIT 9215</strain>
    </source>
</reference>
<comment type="function">
    <text evidence="1">One of the components of the core complex of photosystem II (PSII), required for its stability and/or assembly. PSII is a light-driven water:plastoquinone oxidoreductase that uses light energy to abstract electrons from H(2)O, generating O(2) and a proton gradient subsequently used for ATP formation. It consists of a core antenna complex that captures photons, and an electron transfer chain that converts photonic excitation into a charge separation.</text>
</comment>
<comment type="subunit">
    <text evidence="2">PSII is composed of 1 copy each of membrane proteins PsbA, PsbB, PsbC, PsbD, PsbE, PsbF, PsbH, PsbI, PsbJ, PsbK, PsbL, PsbM, PsbT, PsbX, PsbY, Psb30/Ycf12, peripheral proteins PsbO, CyanoQ (PsbQ), PsbU, PsbV and a large number of cofactors. It forms dimeric complexes.</text>
</comment>
<comment type="subcellular location">
    <subcellularLocation>
        <location evidence="1">Cellular thylakoid membrane</location>
        <topology evidence="1">Single-pass membrane protein</topology>
    </subcellularLocation>
</comment>
<comment type="similarity">
    <text evidence="1">Belongs to the PsbI family.</text>
</comment>